<sequence length="127" mass="13795">MLQLLLAVFIGGGTGSVARWLLSMRFNPLHQAIPLGTLAANLIGAFIIGMGFAWFSRMTNIDPVWKVLITTGFCGGLTTFSTFSAEVVFLLQEGRFGWALLNVFVNLLGSFAMTALAFWLFSASTTH</sequence>
<comment type="function">
    <text evidence="1">Fluoride-specific ion channel. Important for reducing fluoride concentration in the cell, thus reducing its toxicity.</text>
</comment>
<comment type="catalytic activity">
    <reaction evidence="1">
        <text>fluoride(in) = fluoride(out)</text>
        <dbReference type="Rhea" id="RHEA:76159"/>
        <dbReference type="ChEBI" id="CHEBI:17051"/>
    </reaction>
    <physiologicalReaction direction="left-to-right" evidence="1">
        <dbReference type="Rhea" id="RHEA:76160"/>
    </physiologicalReaction>
</comment>
<comment type="activity regulation">
    <text evidence="1">Na(+) is not transported, but it plays an essential structural role and its presence is essential for fluoride channel function.</text>
</comment>
<comment type="subcellular location">
    <subcellularLocation>
        <location evidence="1">Cell inner membrane</location>
        <topology evidence="1">Multi-pass membrane protein</topology>
    </subcellularLocation>
</comment>
<comment type="similarity">
    <text evidence="1">Belongs to the fluoride channel Fluc/FEX (TC 1.A.43) family.</text>
</comment>
<feature type="chain" id="PRO_1000135322" description="Fluoride-specific ion channel FluC">
    <location>
        <begin position="1"/>
        <end position="127"/>
    </location>
</feature>
<feature type="transmembrane region" description="Helical" evidence="1">
    <location>
        <begin position="4"/>
        <end position="24"/>
    </location>
</feature>
<feature type="transmembrane region" description="Helical" evidence="1">
    <location>
        <begin position="35"/>
        <end position="55"/>
    </location>
</feature>
<feature type="transmembrane region" description="Helical" evidence="1">
    <location>
        <begin position="71"/>
        <end position="91"/>
    </location>
</feature>
<feature type="transmembrane region" description="Helical" evidence="1">
    <location>
        <begin position="103"/>
        <end position="123"/>
    </location>
</feature>
<feature type="binding site" evidence="1">
    <location>
        <position position="75"/>
    </location>
    <ligand>
        <name>Na(+)</name>
        <dbReference type="ChEBI" id="CHEBI:29101"/>
        <note>structural</note>
    </ligand>
</feature>
<feature type="binding site" evidence="1">
    <location>
        <position position="78"/>
    </location>
    <ligand>
        <name>Na(+)</name>
        <dbReference type="ChEBI" id="CHEBI:29101"/>
        <note>structural</note>
    </ligand>
</feature>
<accession>B7MRR2</accession>
<proteinExistence type="inferred from homology"/>
<evidence type="ECO:0000255" key="1">
    <source>
        <dbReference type="HAMAP-Rule" id="MF_00454"/>
    </source>
</evidence>
<dbReference type="EMBL" id="CU928162">
    <property type="protein sequence ID" value="CAR06829.1"/>
    <property type="molecule type" value="Genomic_DNA"/>
</dbReference>
<dbReference type="RefSeq" id="WP_000939740.1">
    <property type="nucleotide sequence ID" value="NC_011745.1"/>
</dbReference>
<dbReference type="SMR" id="B7MRR2"/>
<dbReference type="KEGG" id="ecq:ECED1_0621"/>
<dbReference type="HOGENOM" id="CLU_114342_3_3_6"/>
<dbReference type="Proteomes" id="UP000000748">
    <property type="component" value="Chromosome"/>
</dbReference>
<dbReference type="GO" id="GO:0005886">
    <property type="term" value="C:plasma membrane"/>
    <property type="evidence" value="ECO:0007669"/>
    <property type="project" value="UniProtKB-SubCell"/>
</dbReference>
<dbReference type="GO" id="GO:0062054">
    <property type="term" value="F:fluoride channel activity"/>
    <property type="evidence" value="ECO:0007669"/>
    <property type="project" value="UniProtKB-UniRule"/>
</dbReference>
<dbReference type="GO" id="GO:0046872">
    <property type="term" value="F:metal ion binding"/>
    <property type="evidence" value="ECO:0007669"/>
    <property type="project" value="UniProtKB-KW"/>
</dbReference>
<dbReference type="GO" id="GO:0140114">
    <property type="term" value="P:cellular detoxification of fluoride"/>
    <property type="evidence" value="ECO:0007669"/>
    <property type="project" value="UniProtKB-UniRule"/>
</dbReference>
<dbReference type="HAMAP" id="MF_00454">
    <property type="entry name" value="FluC"/>
    <property type="match status" value="1"/>
</dbReference>
<dbReference type="InterPro" id="IPR003691">
    <property type="entry name" value="FluC"/>
</dbReference>
<dbReference type="NCBIfam" id="TIGR00494">
    <property type="entry name" value="crcB"/>
    <property type="match status" value="1"/>
</dbReference>
<dbReference type="NCBIfam" id="NF010792">
    <property type="entry name" value="PRK14196.1"/>
    <property type="match status" value="1"/>
</dbReference>
<dbReference type="PANTHER" id="PTHR28259">
    <property type="entry name" value="FLUORIDE EXPORT PROTEIN 1-RELATED"/>
    <property type="match status" value="1"/>
</dbReference>
<dbReference type="PANTHER" id="PTHR28259:SF1">
    <property type="entry name" value="FLUORIDE EXPORT PROTEIN 1-RELATED"/>
    <property type="match status" value="1"/>
</dbReference>
<dbReference type="Pfam" id="PF02537">
    <property type="entry name" value="CRCB"/>
    <property type="match status" value="1"/>
</dbReference>
<protein>
    <recommendedName>
        <fullName evidence="1">Fluoride-specific ion channel FluC</fullName>
    </recommendedName>
</protein>
<reference key="1">
    <citation type="journal article" date="2009" name="PLoS Genet.">
        <title>Organised genome dynamics in the Escherichia coli species results in highly diverse adaptive paths.</title>
        <authorList>
            <person name="Touchon M."/>
            <person name="Hoede C."/>
            <person name="Tenaillon O."/>
            <person name="Barbe V."/>
            <person name="Baeriswyl S."/>
            <person name="Bidet P."/>
            <person name="Bingen E."/>
            <person name="Bonacorsi S."/>
            <person name="Bouchier C."/>
            <person name="Bouvet O."/>
            <person name="Calteau A."/>
            <person name="Chiapello H."/>
            <person name="Clermont O."/>
            <person name="Cruveiller S."/>
            <person name="Danchin A."/>
            <person name="Diard M."/>
            <person name="Dossat C."/>
            <person name="Karoui M.E."/>
            <person name="Frapy E."/>
            <person name="Garry L."/>
            <person name="Ghigo J.M."/>
            <person name="Gilles A.M."/>
            <person name="Johnson J."/>
            <person name="Le Bouguenec C."/>
            <person name="Lescat M."/>
            <person name="Mangenot S."/>
            <person name="Martinez-Jehanne V."/>
            <person name="Matic I."/>
            <person name="Nassif X."/>
            <person name="Oztas S."/>
            <person name="Petit M.A."/>
            <person name="Pichon C."/>
            <person name="Rouy Z."/>
            <person name="Ruf C.S."/>
            <person name="Schneider D."/>
            <person name="Tourret J."/>
            <person name="Vacherie B."/>
            <person name="Vallenet D."/>
            <person name="Medigue C."/>
            <person name="Rocha E.P.C."/>
            <person name="Denamur E."/>
        </authorList>
    </citation>
    <scope>NUCLEOTIDE SEQUENCE [LARGE SCALE GENOMIC DNA]</scope>
    <source>
        <strain>ED1a</strain>
    </source>
</reference>
<organism>
    <name type="scientific">Escherichia coli O81 (strain ED1a)</name>
    <dbReference type="NCBI Taxonomy" id="585397"/>
    <lineage>
        <taxon>Bacteria</taxon>
        <taxon>Pseudomonadati</taxon>
        <taxon>Pseudomonadota</taxon>
        <taxon>Gammaproteobacteria</taxon>
        <taxon>Enterobacterales</taxon>
        <taxon>Enterobacteriaceae</taxon>
        <taxon>Escherichia</taxon>
    </lineage>
</organism>
<keyword id="KW-0997">Cell inner membrane</keyword>
<keyword id="KW-1003">Cell membrane</keyword>
<keyword id="KW-0407">Ion channel</keyword>
<keyword id="KW-0406">Ion transport</keyword>
<keyword id="KW-0472">Membrane</keyword>
<keyword id="KW-0479">Metal-binding</keyword>
<keyword id="KW-0915">Sodium</keyword>
<keyword id="KW-0812">Transmembrane</keyword>
<keyword id="KW-1133">Transmembrane helix</keyword>
<keyword id="KW-0813">Transport</keyword>
<gene>
    <name evidence="1" type="primary">fluC</name>
    <name evidence="1" type="synonym">crcB</name>
    <name type="ordered locus">ECED1_0621</name>
</gene>
<name>FLUC_ECO81</name>